<name>RLP24_DROME</name>
<organism>
    <name type="scientific">Drosophila melanogaster</name>
    <name type="common">Fruit fly</name>
    <dbReference type="NCBI Taxonomy" id="7227"/>
    <lineage>
        <taxon>Eukaryota</taxon>
        <taxon>Metazoa</taxon>
        <taxon>Ecdysozoa</taxon>
        <taxon>Arthropoda</taxon>
        <taxon>Hexapoda</taxon>
        <taxon>Insecta</taxon>
        <taxon>Pterygota</taxon>
        <taxon>Neoptera</taxon>
        <taxon>Endopterygota</taxon>
        <taxon>Diptera</taxon>
        <taxon>Brachycera</taxon>
        <taxon>Muscomorpha</taxon>
        <taxon>Ephydroidea</taxon>
        <taxon>Drosophilidae</taxon>
        <taxon>Drosophila</taxon>
        <taxon>Sophophora</taxon>
    </lineage>
</organism>
<protein>
    <recommendedName>
        <fullName>Probable ribosome biogenesis protein RLP24</fullName>
    </recommendedName>
</protein>
<sequence length="191" mass="22436">MRIQTCYFCSSKIYPGHGVQFVRNDCKVFKFCRGKCHKAFKRKKNPRKVGWTKAYRKAAGKELAIDPSFEFEKRRNVPMKYSRETWQKGLEAIKRVTEIKEKRTSHFVMERLRKGRQVEIQMDVKDVQRNMSLIRSPAAGLKQRRAQEAAEEAALMEEDLPEEKITYVDARELEKKLEEGMGVEDLEMLEA</sequence>
<proteinExistence type="evidence at protein level"/>
<accession>Q9VGN9</accession>
<gene>
    <name type="primary">RpL24-like</name>
    <name type="ORF">CG6764</name>
</gene>
<evidence type="ECO:0000250" key="1"/>
<evidence type="ECO:0000269" key="2">
    <source>
    </source>
</evidence>
<evidence type="ECO:0000305" key="3"/>
<comment type="function">
    <text evidence="1">Involved in the biogenesis of the 60S ribosomal subunit. Ensures the docking of NOG1 to pre-60S particles (By similarity).</text>
</comment>
<comment type="subunit">
    <text evidence="1">Associated with nucleolar and cytoplasmic pre-60S particles. At the end of biogenesis it dissociates from cytoplasmic pre-60S particles and is likely to be exchanged for its ribosomal homologue, RPL24 (By similarity).</text>
</comment>
<comment type="subcellular location">
    <subcellularLocation>
        <location evidence="1">Nucleus</location>
        <location evidence="1">Nucleolus</location>
    </subcellularLocation>
</comment>
<comment type="similarity">
    <text evidence="3">Belongs to the eukaryotic ribosomal protein eL24 family.</text>
</comment>
<reference key="1">
    <citation type="journal article" date="2000" name="Science">
        <title>The genome sequence of Drosophila melanogaster.</title>
        <authorList>
            <person name="Adams M.D."/>
            <person name="Celniker S.E."/>
            <person name="Holt R.A."/>
            <person name="Evans C.A."/>
            <person name="Gocayne J.D."/>
            <person name="Amanatides P.G."/>
            <person name="Scherer S.E."/>
            <person name="Li P.W."/>
            <person name="Hoskins R.A."/>
            <person name="Galle R.F."/>
            <person name="George R.A."/>
            <person name="Lewis S.E."/>
            <person name="Richards S."/>
            <person name="Ashburner M."/>
            <person name="Henderson S.N."/>
            <person name="Sutton G.G."/>
            <person name="Wortman J.R."/>
            <person name="Yandell M.D."/>
            <person name="Zhang Q."/>
            <person name="Chen L.X."/>
            <person name="Brandon R.C."/>
            <person name="Rogers Y.-H.C."/>
            <person name="Blazej R.G."/>
            <person name="Champe M."/>
            <person name="Pfeiffer B.D."/>
            <person name="Wan K.H."/>
            <person name="Doyle C."/>
            <person name="Baxter E.G."/>
            <person name="Helt G."/>
            <person name="Nelson C.R."/>
            <person name="Miklos G.L.G."/>
            <person name="Abril J.F."/>
            <person name="Agbayani A."/>
            <person name="An H.-J."/>
            <person name="Andrews-Pfannkoch C."/>
            <person name="Baldwin D."/>
            <person name="Ballew R.M."/>
            <person name="Basu A."/>
            <person name="Baxendale J."/>
            <person name="Bayraktaroglu L."/>
            <person name="Beasley E.M."/>
            <person name="Beeson K.Y."/>
            <person name="Benos P.V."/>
            <person name="Berman B.P."/>
            <person name="Bhandari D."/>
            <person name="Bolshakov S."/>
            <person name="Borkova D."/>
            <person name="Botchan M.R."/>
            <person name="Bouck J."/>
            <person name="Brokstein P."/>
            <person name="Brottier P."/>
            <person name="Burtis K.C."/>
            <person name="Busam D.A."/>
            <person name="Butler H."/>
            <person name="Cadieu E."/>
            <person name="Center A."/>
            <person name="Chandra I."/>
            <person name="Cherry J.M."/>
            <person name="Cawley S."/>
            <person name="Dahlke C."/>
            <person name="Davenport L.B."/>
            <person name="Davies P."/>
            <person name="de Pablos B."/>
            <person name="Delcher A."/>
            <person name="Deng Z."/>
            <person name="Mays A.D."/>
            <person name="Dew I."/>
            <person name="Dietz S.M."/>
            <person name="Dodson K."/>
            <person name="Doup L.E."/>
            <person name="Downes M."/>
            <person name="Dugan-Rocha S."/>
            <person name="Dunkov B.C."/>
            <person name="Dunn P."/>
            <person name="Durbin K.J."/>
            <person name="Evangelista C.C."/>
            <person name="Ferraz C."/>
            <person name="Ferriera S."/>
            <person name="Fleischmann W."/>
            <person name="Fosler C."/>
            <person name="Gabrielian A.E."/>
            <person name="Garg N.S."/>
            <person name="Gelbart W.M."/>
            <person name="Glasser K."/>
            <person name="Glodek A."/>
            <person name="Gong F."/>
            <person name="Gorrell J.H."/>
            <person name="Gu Z."/>
            <person name="Guan P."/>
            <person name="Harris M."/>
            <person name="Harris N.L."/>
            <person name="Harvey D.A."/>
            <person name="Heiman T.J."/>
            <person name="Hernandez J.R."/>
            <person name="Houck J."/>
            <person name="Hostin D."/>
            <person name="Houston K.A."/>
            <person name="Howland T.J."/>
            <person name="Wei M.-H."/>
            <person name="Ibegwam C."/>
            <person name="Jalali M."/>
            <person name="Kalush F."/>
            <person name="Karpen G.H."/>
            <person name="Ke Z."/>
            <person name="Kennison J.A."/>
            <person name="Ketchum K.A."/>
            <person name="Kimmel B.E."/>
            <person name="Kodira C.D."/>
            <person name="Kraft C.L."/>
            <person name="Kravitz S."/>
            <person name="Kulp D."/>
            <person name="Lai Z."/>
            <person name="Lasko P."/>
            <person name="Lei Y."/>
            <person name="Levitsky A.A."/>
            <person name="Li J.H."/>
            <person name="Li Z."/>
            <person name="Liang Y."/>
            <person name="Lin X."/>
            <person name="Liu X."/>
            <person name="Mattei B."/>
            <person name="McIntosh T.C."/>
            <person name="McLeod M.P."/>
            <person name="McPherson D."/>
            <person name="Merkulov G."/>
            <person name="Milshina N.V."/>
            <person name="Mobarry C."/>
            <person name="Morris J."/>
            <person name="Moshrefi A."/>
            <person name="Mount S.M."/>
            <person name="Moy M."/>
            <person name="Murphy B."/>
            <person name="Murphy L."/>
            <person name="Muzny D.M."/>
            <person name="Nelson D.L."/>
            <person name="Nelson D.R."/>
            <person name="Nelson K.A."/>
            <person name="Nixon K."/>
            <person name="Nusskern D.R."/>
            <person name="Pacleb J.M."/>
            <person name="Palazzolo M."/>
            <person name="Pittman G.S."/>
            <person name="Pan S."/>
            <person name="Pollard J."/>
            <person name="Puri V."/>
            <person name="Reese M.G."/>
            <person name="Reinert K."/>
            <person name="Remington K."/>
            <person name="Saunders R.D.C."/>
            <person name="Scheeler F."/>
            <person name="Shen H."/>
            <person name="Shue B.C."/>
            <person name="Siden-Kiamos I."/>
            <person name="Simpson M."/>
            <person name="Skupski M.P."/>
            <person name="Smith T.J."/>
            <person name="Spier E."/>
            <person name="Spradling A.C."/>
            <person name="Stapleton M."/>
            <person name="Strong R."/>
            <person name="Sun E."/>
            <person name="Svirskas R."/>
            <person name="Tector C."/>
            <person name="Turner R."/>
            <person name="Venter E."/>
            <person name="Wang A.H."/>
            <person name="Wang X."/>
            <person name="Wang Z.-Y."/>
            <person name="Wassarman D.A."/>
            <person name="Weinstock G.M."/>
            <person name="Weissenbach J."/>
            <person name="Williams S.M."/>
            <person name="Woodage T."/>
            <person name="Worley K.C."/>
            <person name="Wu D."/>
            <person name="Yang S."/>
            <person name="Yao Q.A."/>
            <person name="Ye J."/>
            <person name="Yeh R.-F."/>
            <person name="Zaveri J.S."/>
            <person name="Zhan M."/>
            <person name="Zhang G."/>
            <person name="Zhao Q."/>
            <person name="Zheng L."/>
            <person name="Zheng X.H."/>
            <person name="Zhong F.N."/>
            <person name="Zhong W."/>
            <person name="Zhou X."/>
            <person name="Zhu S.C."/>
            <person name="Zhu X."/>
            <person name="Smith H.O."/>
            <person name="Gibbs R.A."/>
            <person name="Myers E.W."/>
            <person name="Rubin G.M."/>
            <person name="Venter J.C."/>
        </authorList>
    </citation>
    <scope>NUCLEOTIDE SEQUENCE [LARGE SCALE GENOMIC DNA]</scope>
    <source>
        <strain>Berkeley</strain>
    </source>
</reference>
<reference key="2">
    <citation type="journal article" date="2002" name="Genome Biol.">
        <title>Annotation of the Drosophila melanogaster euchromatic genome: a systematic review.</title>
        <authorList>
            <person name="Misra S."/>
            <person name="Crosby M.A."/>
            <person name="Mungall C.J."/>
            <person name="Matthews B.B."/>
            <person name="Campbell K.S."/>
            <person name="Hradecky P."/>
            <person name="Huang Y."/>
            <person name="Kaminker J.S."/>
            <person name="Millburn G.H."/>
            <person name="Prochnik S.E."/>
            <person name="Smith C.D."/>
            <person name="Tupy J.L."/>
            <person name="Whitfield E.J."/>
            <person name="Bayraktaroglu L."/>
            <person name="Berman B.P."/>
            <person name="Bettencourt B.R."/>
            <person name="Celniker S.E."/>
            <person name="de Grey A.D.N.J."/>
            <person name="Drysdale R.A."/>
            <person name="Harris N.L."/>
            <person name="Richter J."/>
            <person name="Russo S."/>
            <person name="Schroeder A.J."/>
            <person name="Shu S.Q."/>
            <person name="Stapleton M."/>
            <person name="Yamada C."/>
            <person name="Ashburner M."/>
            <person name="Gelbart W.M."/>
            <person name="Rubin G.M."/>
            <person name="Lewis S.E."/>
        </authorList>
    </citation>
    <scope>GENOME REANNOTATION</scope>
    <source>
        <strain>Berkeley</strain>
    </source>
</reference>
<reference key="3">
    <citation type="journal article" date="2002" name="Genome Biol.">
        <title>A Drosophila full-length cDNA resource.</title>
        <authorList>
            <person name="Stapleton M."/>
            <person name="Carlson J.W."/>
            <person name="Brokstein P."/>
            <person name="Yu C."/>
            <person name="Champe M."/>
            <person name="George R.A."/>
            <person name="Guarin H."/>
            <person name="Kronmiller B."/>
            <person name="Pacleb J.M."/>
            <person name="Park S."/>
            <person name="Wan K.H."/>
            <person name="Rubin G.M."/>
            <person name="Celniker S.E."/>
        </authorList>
    </citation>
    <scope>NUCLEOTIDE SEQUENCE [LARGE SCALE MRNA]</scope>
    <source>
        <strain>Berkeley</strain>
        <tissue>Testis</tissue>
    </source>
</reference>
<reference key="4">
    <citation type="journal article" date="2008" name="J. Proteome Res.">
        <title>Phosphoproteome analysis of Drosophila melanogaster embryos.</title>
        <authorList>
            <person name="Zhai B."/>
            <person name="Villen J."/>
            <person name="Beausoleil S.A."/>
            <person name="Mintseris J."/>
            <person name="Gygi S.P."/>
        </authorList>
    </citation>
    <scope>PHOSPHORYLATION [LARGE SCALE ANALYSIS] AT SER-136</scope>
    <scope>IDENTIFICATION BY MASS SPECTROMETRY</scope>
    <source>
        <tissue>Embryo</tissue>
    </source>
</reference>
<dbReference type="EMBL" id="AE014297">
    <property type="protein sequence ID" value="AAF54637.1"/>
    <property type="molecule type" value="Genomic_DNA"/>
</dbReference>
<dbReference type="EMBL" id="AY113325">
    <property type="protein sequence ID" value="AAM29330.1"/>
    <property type="molecule type" value="mRNA"/>
</dbReference>
<dbReference type="RefSeq" id="NP_650073.1">
    <property type="nucleotide sequence ID" value="NM_141816.4"/>
</dbReference>
<dbReference type="SMR" id="Q9VGN9"/>
<dbReference type="BioGRID" id="66505">
    <property type="interactions" value="9"/>
</dbReference>
<dbReference type="FunCoup" id="Q9VGN9">
    <property type="interactions" value="1747"/>
</dbReference>
<dbReference type="IntAct" id="Q9VGN9">
    <property type="interactions" value="43"/>
</dbReference>
<dbReference type="STRING" id="7227.FBpp0081879"/>
<dbReference type="iPTMnet" id="Q9VGN9"/>
<dbReference type="PaxDb" id="7227-FBpp0081879"/>
<dbReference type="DNASU" id="41372"/>
<dbReference type="EnsemblMetazoa" id="FBtr0082403">
    <property type="protein sequence ID" value="FBpp0081879"/>
    <property type="gene ID" value="FBgn0037899"/>
</dbReference>
<dbReference type="GeneID" id="41372"/>
<dbReference type="KEGG" id="dme:Dmel_CG6764"/>
<dbReference type="UCSC" id="CG6764-RA">
    <property type="organism name" value="d. melanogaster"/>
</dbReference>
<dbReference type="AGR" id="FB:FBgn0037899"/>
<dbReference type="CTD" id="41372"/>
<dbReference type="FlyBase" id="FBgn0037899">
    <property type="gene designation" value="RpL24-like"/>
</dbReference>
<dbReference type="VEuPathDB" id="VectorBase:FBgn0037899"/>
<dbReference type="eggNOG" id="KOG1723">
    <property type="taxonomic scope" value="Eukaryota"/>
</dbReference>
<dbReference type="GeneTree" id="ENSGT00950000183105"/>
<dbReference type="HOGENOM" id="CLU_089419_1_1_1"/>
<dbReference type="InParanoid" id="Q9VGN9"/>
<dbReference type="OMA" id="TCYFCSG"/>
<dbReference type="OrthoDB" id="10262490at2759"/>
<dbReference type="PhylomeDB" id="Q9VGN9"/>
<dbReference type="BioGRID-ORCS" id="41372">
    <property type="hits" value="0 hits in 1 CRISPR screen"/>
</dbReference>
<dbReference type="ChiTaRS" id="RpL24-like">
    <property type="organism name" value="fly"/>
</dbReference>
<dbReference type="GenomeRNAi" id="41372"/>
<dbReference type="PRO" id="PR:Q9VGN9"/>
<dbReference type="Proteomes" id="UP000000803">
    <property type="component" value="Chromosome 3R"/>
</dbReference>
<dbReference type="Bgee" id="FBgn0037899">
    <property type="expression patterns" value="Expressed in adult enteroendocrine precursor cell in adult midgut (Drosophila) and 271 other cell types or tissues"/>
</dbReference>
<dbReference type="GO" id="GO:0022625">
    <property type="term" value="C:cytosolic large ribosomal subunit"/>
    <property type="evidence" value="ECO:0000304"/>
    <property type="project" value="FlyBase"/>
</dbReference>
<dbReference type="GO" id="GO:0005730">
    <property type="term" value="C:nucleolus"/>
    <property type="evidence" value="ECO:0000318"/>
    <property type="project" value="GO_Central"/>
</dbReference>
<dbReference type="GO" id="GO:0003735">
    <property type="term" value="F:structural constituent of ribosome"/>
    <property type="evidence" value="ECO:0000304"/>
    <property type="project" value="FlyBase"/>
</dbReference>
<dbReference type="GO" id="GO:0002181">
    <property type="term" value="P:cytoplasmic translation"/>
    <property type="evidence" value="ECO:0000304"/>
    <property type="project" value="FlyBase"/>
</dbReference>
<dbReference type="GO" id="GO:0042273">
    <property type="term" value="P:ribosomal large subunit biogenesis"/>
    <property type="evidence" value="ECO:0000318"/>
    <property type="project" value="GO_Central"/>
</dbReference>
<dbReference type="CDD" id="cd00472">
    <property type="entry name" value="Ribosomal_L24e_L24"/>
    <property type="match status" value="1"/>
</dbReference>
<dbReference type="FunFam" id="2.30.170.20:FF:000001">
    <property type="entry name" value="probable ribosome biogenesis protein RLP24"/>
    <property type="match status" value="1"/>
</dbReference>
<dbReference type="Gene3D" id="2.30.170.20">
    <property type="entry name" value="Ribosomal protein L24e"/>
    <property type="match status" value="1"/>
</dbReference>
<dbReference type="InterPro" id="IPR038630">
    <property type="entry name" value="L24e/L24_sf"/>
</dbReference>
<dbReference type="InterPro" id="IPR056366">
    <property type="entry name" value="Ribosomal_eL24"/>
</dbReference>
<dbReference type="InterPro" id="IPR000988">
    <property type="entry name" value="Ribosomal_eL24-rel_N"/>
</dbReference>
<dbReference type="InterPro" id="IPR023442">
    <property type="entry name" value="Ribosomal_eL24_CS"/>
</dbReference>
<dbReference type="InterPro" id="IPR011017">
    <property type="entry name" value="TRASH_dom"/>
</dbReference>
<dbReference type="PANTHER" id="PTHR10792">
    <property type="entry name" value="60S RIBOSOMAL PROTEIN L24"/>
    <property type="match status" value="1"/>
</dbReference>
<dbReference type="PANTHER" id="PTHR10792:SF8">
    <property type="entry name" value="RIBOSOME BIOGENESIS PROTEIN RLP24-RELATED"/>
    <property type="match status" value="1"/>
</dbReference>
<dbReference type="Pfam" id="PF01246">
    <property type="entry name" value="Ribosomal_L24e"/>
    <property type="match status" value="1"/>
</dbReference>
<dbReference type="SMART" id="SM00746">
    <property type="entry name" value="TRASH"/>
    <property type="match status" value="1"/>
</dbReference>
<dbReference type="SUPFAM" id="SSF57716">
    <property type="entry name" value="Glucocorticoid receptor-like (DNA-binding domain)"/>
    <property type="match status" value="1"/>
</dbReference>
<dbReference type="PROSITE" id="PS01073">
    <property type="entry name" value="RIBOSOMAL_L24E"/>
    <property type="match status" value="1"/>
</dbReference>
<feature type="chain" id="PRO_0000136902" description="Probable ribosome biogenesis protein RLP24">
    <location>
        <begin position="1"/>
        <end position="191"/>
    </location>
</feature>
<feature type="modified residue" description="Phosphoserine" evidence="2">
    <location>
        <position position="136"/>
    </location>
</feature>
<keyword id="KW-0539">Nucleus</keyword>
<keyword id="KW-0597">Phosphoprotein</keyword>
<keyword id="KW-1185">Reference proteome</keyword>
<keyword id="KW-0690">Ribosome biogenesis</keyword>